<accession>B4SH40</accession>
<dbReference type="EMBL" id="CP001110">
    <property type="protein sequence ID" value="ACF45028.1"/>
    <property type="molecule type" value="Genomic_DNA"/>
</dbReference>
<dbReference type="RefSeq" id="WP_012509496.1">
    <property type="nucleotide sequence ID" value="NC_011060.1"/>
</dbReference>
<dbReference type="SMR" id="B4SH40"/>
<dbReference type="STRING" id="324925.Ppha_2885"/>
<dbReference type="KEGG" id="pph:Ppha_2885"/>
<dbReference type="eggNOG" id="COG0356">
    <property type="taxonomic scope" value="Bacteria"/>
</dbReference>
<dbReference type="HOGENOM" id="CLU_041018_0_0_10"/>
<dbReference type="OrthoDB" id="9809130at2"/>
<dbReference type="Proteomes" id="UP000002724">
    <property type="component" value="Chromosome"/>
</dbReference>
<dbReference type="GO" id="GO:0005886">
    <property type="term" value="C:plasma membrane"/>
    <property type="evidence" value="ECO:0007669"/>
    <property type="project" value="UniProtKB-SubCell"/>
</dbReference>
<dbReference type="GO" id="GO:0045259">
    <property type="term" value="C:proton-transporting ATP synthase complex"/>
    <property type="evidence" value="ECO:0007669"/>
    <property type="project" value="UniProtKB-KW"/>
</dbReference>
<dbReference type="GO" id="GO:0046933">
    <property type="term" value="F:proton-transporting ATP synthase activity, rotational mechanism"/>
    <property type="evidence" value="ECO:0007669"/>
    <property type="project" value="UniProtKB-UniRule"/>
</dbReference>
<dbReference type="CDD" id="cd00310">
    <property type="entry name" value="ATP-synt_Fo_a_6"/>
    <property type="match status" value="1"/>
</dbReference>
<dbReference type="Gene3D" id="1.20.120.220">
    <property type="entry name" value="ATP synthase, F0 complex, subunit A"/>
    <property type="match status" value="1"/>
</dbReference>
<dbReference type="HAMAP" id="MF_01393">
    <property type="entry name" value="ATP_synth_a_bact"/>
    <property type="match status" value="1"/>
</dbReference>
<dbReference type="InterPro" id="IPR000568">
    <property type="entry name" value="ATP_synth_F0_asu"/>
</dbReference>
<dbReference type="InterPro" id="IPR023011">
    <property type="entry name" value="ATP_synth_F0_asu_AS"/>
</dbReference>
<dbReference type="InterPro" id="IPR045083">
    <property type="entry name" value="ATP_synth_F0_asu_bact/mt"/>
</dbReference>
<dbReference type="InterPro" id="IPR035908">
    <property type="entry name" value="F0_ATP_A_sf"/>
</dbReference>
<dbReference type="NCBIfam" id="TIGR01131">
    <property type="entry name" value="ATP_synt_6_or_A"/>
    <property type="match status" value="1"/>
</dbReference>
<dbReference type="NCBIfam" id="NF009953">
    <property type="entry name" value="PRK13419.1"/>
    <property type="match status" value="1"/>
</dbReference>
<dbReference type="PANTHER" id="PTHR11410">
    <property type="entry name" value="ATP SYNTHASE SUBUNIT A"/>
    <property type="match status" value="1"/>
</dbReference>
<dbReference type="PANTHER" id="PTHR11410:SF0">
    <property type="entry name" value="ATP SYNTHASE SUBUNIT A"/>
    <property type="match status" value="1"/>
</dbReference>
<dbReference type="Pfam" id="PF00119">
    <property type="entry name" value="ATP-synt_A"/>
    <property type="match status" value="1"/>
</dbReference>
<dbReference type="PRINTS" id="PR00123">
    <property type="entry name" value="ATPASEA"/>
</dbReference>
<dbReference type="SUPFAM" id="SSF81336">
    <property type="entry name" value="F1F0 ATP synthase subunit A"/>
    <property type="match status" value="1"/>
</dbReference>
<dbReference type="PROSITE" id="PS00449">
    <property type="entry name" value="ATPASE_A"/>
    <property type="match status" value="1"/>
</dbReference>
<sequence length="340" mass="36825">MKRVNVIQAKAFLKVIALLVPLLLNANGPAFALTEQASTPPHDSVASVSAPTAEAAVAAHAHGEEKAGDVIMHHILDNDVFSFEPFGEVHLPKIPPIAGVDISITKHVVMLWVVSAILLILFSLVGSKYKKMTARQAPTGLVNAMEALVEFIRIDVAKANIGVGYEKYLNYLLTVFFFVLLCNLLGLVPYGATATGNINVTLTLATFTFFITQVAALKAHGIKGYLAHLTGGTHPALWIIMIPIEFIGLFTKPVALTIRLFANMTAGHIVILSLIFISFILQSYIVAVVMSVPFSIFIYLLELFVAFLQAFIFTMLSSLFIGLASAHEGHEEHEAGVAHH</sequence>
<organism>
    <name type="scientific">Pelodictyon phaeoclathratiforme (strain DSM 5477 / BU-1)</name>
    <dbReference type="NCBI Taxonomy" id="324925"/>
    <lineage>
        <taxon>Bacteria</taxon>
        <taxon>Pseudomonadati</taxon>
        <taxon>Chlorobiota</taxon>
        <taxon>Chlorobiia</taxon>
        <taxon>Chlorobiales</taxon>
        <taxon>Chlorobiaceae</taxon>
        <taxon>Chlorobium/Pelodictyon group</taxon>
        <taxon>Pelodictyon</taxon>
    </lineage>
</organism>
<keyword id="KW-0066">ATP synthesis</keyword>
<keyword id="KW-0997">Cell inner membrane</keyword>
<keyword id="KW-1003">Cell membrane</keyword>
<keyword id="KW-0138">CF(0)</keyword>
<keyword id="KW-0375">Hydrogen ion transport</keyword>
<keyword id="KW-0406">Ion transport</keyword>
<keyword id="KW-0472">Membrane</keyword>
<keyword id="KW-1185">Reference proteome</keyword>
<keyword id="KW-0732">Signal</keyword>
<keyword id="KW-0812">Transmembrane</keyword>
<keyword id="KW-1133">Transmembrane helix</keyword>
<keyword id="KW-0813">Transport</keyword>
<protein>
    <recommendedName>
        <fullName evidence="2">ATP synthase subunit a</fullName>
    </recommendedName>
    <alternativeName>
        <fullName evidence="2">ATP synthase F0 sector subunit a</fullName>
    </alternativeName>
    <alternativeName>
        <fullName evidence="2">F-ATPase subunit 6</fullName>
    </alternativeName>
</protein>
<feature type="signal peptide" evidence="1">
    <location>
        <begin position="1"/>
        <end position="32"/>
    </location>
</feature>
<feature type="chain" id="PRO_5000388705" description="ATP synthase subunit a">
    <location>
        <begin position="33"/>
        <end position="340"/>
    </location>
</feature>
<feature type="transmembrane region" description="Helical" evidence="2">
    <location>
        <begin position="107"/>
        <end position="127"/>
    </location>
</feature>
<feature type="transmembrane region" description="Helical" evidence="2">
    <location>
        <begin position="172"/>
        <end position="192"/>
    </location>
</feature>
<feature type="transmembrane region" description="Helical" evidence="2">
    <location>
        <begin position="197"/>
        <end position="217"/>
    </location>
</feature>
<feature type="transmembrane region" description="Helical" evidence="2">
    <location>
        <begin position="236"/>
        <end position="256"/>
    </location>
</feature>
<feature type="transmembrane region" description="Helical" evidence="2">
    <location>
        <begin position="269"/>
        <end position="289"/>
    </location>
</feature>
<feature type="transmembrane region" description="Helical" evidence="2">
    <location>
        <begin position="296"/>
        <end position="316"/>
    </location>
</feature>
<proteinExistence type="inferred from homology"/>
<reference key="1">
    <citation type="submission" date="2008-06" db="EMBL/GenBank/DDBJ databases">
        <title>Complete sequence of Pelodictyon phaeoclathratiforme BU-1.</title>
        <authorList>
            <consortium name="US DOE Joint Genome Institute"/>
            <person name="Lucas S."/>
            <person name="Copeland A."/>
            <person name="Lapidus A."/>
            <person name="Glavina del Rio T."/>
            <person name="Dalin E."/>
            <person name="Tice H."/>
            <person name="Bruce D."/>
            <person name="Goodwin L."/>
            <person name="Pitluck S."/>
            <person name="Schmutz J."/>
            <person name="Larimer F."/>
            <person name="Land M."/>
            <person name="Hauser L."/>
            <person name="Kyrpides N."/>
            <person name="Mikhailova N."/>
            <person name="Liu Z."/>
            <person name="Li T."/>
            <person name="Zhao F."/>
            <person name="Overmann J."/>
            <person name="Bryant D.A."/>
            <person name="Richardson P."/>
        </authorList>
    </citation>
    <scope>NUCLEOTIDE SEQUENCE [LARGE SCALE GENOMIC DNA]</scope>
    <source>
        <strain>DSM 5477 / BU-1</strain>
    </source>
</reference>
<evidence type="ECO:0000255" key="1"/>
<evidence type="ECO:0000255" key="2">
    <source>
        <dbReference type="HAMAP-Rule" id="MF_01393"/>
    </source>
</evidence>
<comment type="function">
    <text evidence="2">Key component of the proton channel; it plays a direct role in the translocation of protons across the membrane.</text>
</comment>
<comment type="subunit">
    <text evidence="2">F-type ATPases have 2 components, CF(1) - the catalytic core - and CF(0) - the membrane proton channel. CF(1) has five subunits: alpha(3), beta(3), gamma(1), delta(1), epsilon(1). CF(0) has four main subunits: a, b, b' and c.</text>
</comment>
<comment type="subcellular location">
    <subcellularLocation>
        <location evidence="2">Cell inner membrane</location>
        <topology evidence="2">Multi-pass membrane protein</topology>
    </subcellularLocation>
</comment>
<comment type="similarity">
    <text evidence="2">Belongs to the ATPase A chain family.</text>
</comment>
<name>ATP6_PELPB</name>
<gene>
    <name evidence="2" type="primary">atpB</name>
    <name type="ordered locus">Ppha_2885</name>
</gene>